<keyword id="KW-0521">NADP</keyword>
<keyword id="KW-0560">Oxidoreductase</keyword>
<keyword id="KW-0627">Porphyrin biosynthesis</keyword>
<keyword id="KW-1185">Reference proteome</keyword>
<name>HEM1_NITV2</name>
<protein>
    <recommendedName>
        <fullName evidence="1">Glutamyl-tRNA reductase</fullName>
        <shortName evidence="1">GluTR</shortName>
        <ecNumber evidence="1">1.2.1.70</ecNumber>
    </recommendedName>
</protein>
<feature type="chain" id="PRO_0000114021" description="Glutamyl-tRNA reductase">
    <location>
        <begin position="1"/>
        <end position="440"/>
    </location>
</feature>
<feature type="active site" description="Nucleophile" evidence="1">
    <location>
        <position position="51"/>
    </location>
</feature>
<feature type="binding site" evidence="1">
    <location>
        <begin position="50"/>
        <end position="53"/>
    </location>
    <ligand>
        <name>substrate</name>
    </ligand>
</feature>
<feature type="binding site" evidence="1">
    <location>
        <position position="109"/>
    </location>
    <ligand>
        <name>substrate</name>
    </ligand>
</feature>
<feature type="binding site" evidence="1">
    <location>
        <begin position="114"/>
        <end position="116"/>
    </location>
    <ligand>
        <name>substrate</name>
    </ligand>
</feature>
<feature type="binding site" evidence="1">
    <location>
        <position position="120"/>
    </location>
    <ligand>
        <name>substrate</name>
    </ligand>
</feature>
<feature type="binding site" evidence="1">
    <location>
        <begin position="189"/>
        <end position="194"/>
    </location>
    <ligand>
        <name>NADP(+)</name>
        <dbReference type="ChEBI" id="CHEBI:58349"/>
    </ligand>
</feature>
<feature type="site" description="Important for activity" evidence="1">
    <location>
        <position position="99"/>
    </location>
</feature>
<evidence type="ECO:0000255" key="1">
    <source>
        <dbReference type="HAMAP-Rule" id="MF_00087"/>
    </source>
</evidence>
<sequence length="440" mass="50045">MERDIYLIGLNHRTAGVEVRERFALTDCNVLEQGVVPIDDVVSEVLILSTCNRVEILAVGRGPEVVSRVLRGWSAARGQCEHDLAPYVYTHKGPEAIRHLFRVASSLDSMVVGEPQILGQLKDAYRKAIERNCTRVILNRLLHKAFSVAKRVRTETGVASSAVSISYAAVELAKRIFGEMNQYKAMLIGAGEMAELAATHLLHAGISKIYVANRTFERGRELARQFNGEAIHFEDLFERLADADIIISSTGAHEAIIRARDIKDVLRRRKHRPMFFIDIAVPRDIDPDVNNLDNVYLYDIDDLKEVVEENLAQRREEASKALTIVEEETGKFGQWLRSLELQPTIVDLIRRSERIAQDELARTLKRLGPVDDETRDALEAMLSSMVRKLNHEPITFLKRRHSEEDAGPRYIDIARRMFNLDDDNVPPDAHCDRRRHDEDN</sequence>
<organism>
    <name type="scientific">Nitratidesulfovibrio vulgaris (strain ATCC 29579 / DSM 644 / CCUG 34227 / NCIMB 8303 / VKM B-1760 / Hildenborough)</name>
    <name type="common">Desulfovibrio vulgaris</name>
    <dbReference type="NCBI Taxonomy" id="882"/>
    <lineage>
        <taxon>Bacteria</taxon>
        <taxon>Pseudomonadati</taxon>
        <taxon>Thermodesulfobacteriota</taxon>
        <taxon>Desulfovibrionia</taxon>
        <taxon>Desulfovibrionales</taxon>
        <taxon>Desulfovibrionaceae</taxon>
        <taxon>Nitratidesulfovibrio</taxon>
    </lineage>
</organism>
<reference key="1">
    <citation type="journal article" date="2004" name="Nat. Biotechnol.">
        <title>The genome sequence of the anaerobic, sulfate-reducing bacterium Desulfovibrio vulgaris Hildenborough.</title>
        <authorList>
            <person name="Heidelberg J.F."/>
            <person name="Seshadri R."/>
            <person name="Haveman S.A."/>
            <person name="Hemme C.L."/>
            <person name="Paulsen I.T."/>
            <person name="Kolonay J.F."/>
            <person name="Eisen J.A."/>
            <person name="Ward N.L."/>
            <person name="Methe B.A."/>
            <person name="Brinkac L.M."/>
            <person name="Daugherty S.C."/>
            <person name="DeBoy R.T."/>
            <person name="Dodson R.J."/>
            <person name="Durkin A.S."/>
            <person name="Madupu R."/>
            <person name="Nelson W.C."/>
            <person name="Sullivan S.A."/>
            <person name="Fouts D.E."/>
            <person name="Haft D.H."/>
            <person name="Selengut J."/>
            <person name="Peterson J.D."/>
            <person name="Davidsen T.M."/>
            <person name="Zafar N."/>
            <person name="Zhou L."/>
            <person name="Radune D."/>
            <person name="Dimitrov G."/>
            <person name="Hance M."/>
            <person name="Tran K."/>
            <person name="Khouri H.M."/>
            <person name="Gill J."/>
            <person name="Utterback T.R."/>
            <person name="Feldblyum T.V."/>
            <person name="Wall J.D."/>
            <person name="Voordouw G."/>
            <person name="Fraser C.M."/>
        </authorList>
    </citation>
    <scope>NUCLEOTIDE SEQUENCE [LARGE SCALE GENOMIC DNA]</scope>
    <source>
        <strain>ATCC 29579 / DSM 644 / CCUG 34227 / NCIMB 8303 / VKM B-1760 / Hildenborough</strain>
    </source>
</reference>
<proteinExistence type="inferred from homology"/>
<dbReference type="EC" id="1.2.1.70" evidence="1"/>
<dbReference type="EMBL" id="AE017285">
    <property type="protein sequence ID" value="AAS95939.1"/>
    <property type="molecule type" value="Genomic_DNA"/>
</dbReference>
<dbReference type="RefSeq" id="WP_010938754.1">
    <property type="nucleotide sequence ID" value="NC_002937.3"/>
</dbReference>
<dbReference type="RefSeq" id="YP_010680.1">
    <property type="nucleotide sequence ID" value="NC_002937.3"/>
</dbReference>
<dbReference type="SMR" id="Q72C23"/>
<dbReference type="IntAct" id="Q72C23">
    <property type="interactions" value="1"/>
</dbReference>
<dbReference type="STRING" id="882.DVU_1461"/>
<dbReference type="PaxDb" id="882-DVU_1461"/>
<dbReference type="EnsemblBacteria" id="AAS95939">
    <property type="protein sequence ID" value="AAS95939"/>
    <property type="gene ID" value="DVU_1461"/>
</dbReference>
<dbReference type="KEGG" id="dvu:DVU_1461"/>
<dbReference type="PATRIC" id="fig|882.5.peg.1360"/>
<dbReference type="eggNOG" id="COG0373">
    <property type="taxonomic scope" value="Bacteria"/>
</dbReference>
<dbReference type="HOGENOM" id="CLU_035113_2_2_7"/>
<dbReference type="OrthoDB" id="110209at2"/>
<dbReference type="PhylomeDB" id="Q72C23"/>
<dbReference type="UniPathway" id="UPA00251">
    <property type="reaction ID" value="UER00316"/>
</dbReference>
<dbReference type="Proteomes" id="UP000002194">
    <property type="component" value="Chromosome"/>
</dbReference>
<dbReference type="GO" id="GO:0008883">
    <property type="term" value="F:glutamyl-tRNA reductase activity"/>
    <property type="evidence" value="ECO:0007669"/>
    <property type="project" value="UniProtKB-UniRule"/>
</dbReference>
<dbReference type="GO" id="GO:0050661">
    <property type="term" value="F:NADP binding"/>
    <property type="evidence" value="ECO:0007669"/>
    <property type="project" value="InterPro"/>
</dbReference>
<dbReference type="GO" id="GO:0019353">
    <property type="term" value="P:protoporphyrinogen IX biosynthetic process from glutamate"/>
    <property type="evidence" value="ECO:0007669"/>
    <property type="project" value="TreeGrafter"/>
</dbReference>
<dbReference type="CDD" id="cd05213">
    <property type="entry name" value="NAD_bind_Glutamyl_tRNA_reduct"/>
    <property type="match status" value="1"/>
</dbReference>
<dbReference type="FunFam" id="3.30.460.30:FF:000001">
    <property type="entry name" value="Glutamyl-tRNA reductase"/>
    <property type="match status" value="1"/>
</dbReference>
<dbReference type="FunFam" id="3.40.50.720:FF:000031">
    <property type="entry name" value="Glutamyl-tRNA reductase"/>
    <property type="match status" value="1"/>
</dbReference>
<dbReference type="Gene3D" id="3.30.460.30">
    <property type="entry name" value="Glutamyl-tRNA reductase, N-terminal domain"/>
    <property type="match status" value="1"/>
</dbReference>
<dbReference type="Gene3D" id="3.40.50.720">
    <property type="entry name" value="NAD(P)-binding Rossmann-like Domain"/>
    <property type="match status" value="1"/>
</dbReference>
<dbReference type="HAMAP" id="MF_00087">
    <property type="entry name" value="Glu_tRNA_reductase"/>
    <property type="match status" value="1"/>
</dbReference>
<dbReference type="InterPro" id="IPR000343">
    <property type="entry name" value="4pyrrol_synth_GluRdtase"/>
</dbReference>
<dbReference type="InterPro" id="IPR015896">
    <property type="entry name" value="4pyrrol_synth_GluRdtase_dimer"/>
</dbReference>
<dbReference type="InterPro" id="IPR015895">
    <property type="entry name" value="4pyrrol_synth_GluRdtase_N"/>
</dbReference>
<dbReference type="InterPro" id="IPR018214">
    <property type="entry name" value="GluRdtase_CS"/>
</dbReference>
<dbReference type="InterPro" id="IPR036453">
    <property type="entry name" value="GluRdtase_dimer_dom_sf"/>
</dbReference>
<dbReference type="InterPro" id="IPR036343">
    <property type="entry name" value="GluRdtase_N_sf"/>
</dbReference>
<dbReference type="InterPro" id="IPR036291">
    <property type="entry name" value="NAD(P)-bd_dom_sf"/>
</dbReference>
<dbReference type="InterPro" id="IPR006151">
    <property type="entry name" value="Shikm_DH/Glu-tRNA_Rdtase"/>
</dbReference>
<dbReference type="NCBIfam" id="TIGR01035">
    <property type="entry name" value="hemA"/>
    <property type="match status" value="1"/>
</dbReference>
<dbReference type="PANTHER" id="PTHR43013">
    <property type="entry name" value="GLUTAMYL-TRNA REDUCTASE"/>
    <property type="match status" value="1"/>
</dbReference>
<dbReference type="PANTHER" id="PTHR43013:SF1">
    <property type="entry name" value="GLUTAMYL-TRNA REDUCTASE"/>
    <property type="match status" value="1"/>
</dbReference>
<dbReference type="Pfam" id="PF00745">
    <property type="entry name" value="GlutR_dimer"/>
    <property type="match status" value="1"/>
</dbReference>
<dbReference type="Pfam" id="PF05201">
    <property type="entry name" value="GlutR_N"/>
    <property type="match status" value="1"/>
</dbReference>
<dbReference type="Pfam" id="PF01488">
    <property type="entry name" value="Shikimate_DH"/>
    <property type="match status" value="1"/>
</dbReference>
<dbReference type="PIRSF" id="PIRSF000445">
    <property type="entry name" value="4pyrrol_synth_GluRdtase"/>
    <property type="match status" value="1"/>
</dbReference>
<dbReference type="SUPFAM" id="SSF69742">
    <property type="entry name" value="Glutamyl tRNA-reductase catalytic, N-terminal domain"/>
    <property type="match status" value="1"/>
</dbReference>
<dbReference type="SUPFAM" id="SSF69075">
    <property type="entry name" value="Glutamyl tRNA-reductase dimerization domain"/>
    <property type="match status" value="1"/>
</dbReference>
<dbReference type="SUPFAM" id="SSF51735">
    <property type="entry name" value="NAD(P)-binding Rossmann-fold domains"/>
    <property type="match status" value="1"/>
</dbReference>
<dbReference type="PROSITE" id="PS00747">
    <property type="entry name" value="GLUTR"/>
    <property type="match status" value="1"/>
</dbReference>
<gene>
    <name evidence="1" type="primary">hemA</name>
    <name type="ordered locus">DVU_1461</name>
</gene>
<comment type="function">
    <text evidence="1">Catalyzes the NADPH-dependent reduction of glutamyl-tRNA(Glu) to glutamate 1-semialdehyde (GSA).</text>
</comment>
<comment type="catalytic activity">
    <reaction evidence="1">
        <text>(S)-4-amino-5-oxopentanoate + tRNA(Glu) + NADP(+) = L-glutamyl-tRNA(Glu) + NADPH + H(+)</text>
        <dbReference type="Rhea" id="RHEA:12344"/>
        <dbReference type="Rhea" id="RHEA-COMP:9663"/>
        <dbReference type="Rhea" id="RHEA-COMP:9680"/>
        <dbReference type="ChEBI" id="CHEBI:15378"/>
        <dbReference type="ChEBI" id="CHEBI:57501"/>
        <dbReference type="ChEBI" id="CHEBI:57783"/>
        <dbReference type="ChEBI" id="CHEBI:58349"/>
        <dbReference type="ChEBI" id="CHEBI:78442"/>
        <dbReference type="ChEBI" id="CHEBI:78520"/>
        <dbReference type="EC" id="1.2.1.70"/>
    </reaction>
</comment>
<comment type="pathway">
    <text evidence="1">Porphyrin-containing compound metabolism; protoporphyrin-IX biosynthesis; 5-aminolevulinate from L-glutamyl-tRNA(Glu): step 1/2.</text>
</comment>
<comment type="subunit">
    <text evidence="1">Homodimer.</text>
</comment>
<comment type="domain">
    <text evidence="1">Possesses an unusual extended V-shaped dimeric structure with each monomer consisting of three distinct domains arranged along a curved 'spinal' alpha-helix. The N-terminal catalytic domain specifically recognizes the glutamate moiety of the substrate. The second domain is the NADPH-binding domain, and the third C-terminal domain is responsible for dimerization.</text>
</comment>
<comment type="miscellaneous">
    <text evidence="1">During catalysis, the active site Cys acts as a nucleophile attacking the alpha-carbonyl group of tRNA-bound glutamate with the formation of a thioester intermediate between enzyme and glutamate, and the concomitant release of tRNA(Glu). The thioester intermediate is finally reduced by direct hydride transfer from NADPH, to form the product GSA.</text>
</comment>
<comment type="similarity">
    <text evidence="1">Belongs to the glutamyl-tRNA reductase family.</text>
</comment>
<accession>Q72C23</accession>